<feature type="signal peptide" evidence="1">
    <location>
        <begin position="1"/>
        <end position="24"/>
    </location>
</feature>
<feature type="chain" id="PRO_5000053366" description="EG45-like domain containing protein">
    <location>
        <begin position="25"/>
        <end position="131"/>
    </location>
</feature>
<feature type="domain" description="Expansin-like EG45; incomplete" evidence="2">
    <location>
        <begin position="27"/>
        <end position="131"/>
    </location>
</feature>
<feature type="disulfide bond" evidence="2">
    <location>
        <begin position="73"/>
        <end position="85"/>
    </location>
</feature>
<keyword id="KW-0903">Direct protein sequencing</keyword>
<keyword id="KW-1015">Disulfide bond</keyword>
<keyword id="KW-0964">Secreted</keyword>
<keyword id="KW-0732">Signal</keyword>
<accession>Q9ZP41</accession>
<dbReference type="EMBL" id="AF015782">
    <property type="protein sequence ID" value="AAD03398.1"/>
    <property type="molecule type" value="mRNA"/>
</dbReference>
<dbReference type="SMR" id="Q9ZP41"/>
<dbReference type="GO" id="GO:0048046">
    <property type="term" value="C:apoplast"/>
    <property type="evidence" value="ECO:0007669"/>
    <property type="project" value="InterPro"/>
</dbReference>
<dbReference type="GO" id="GO:0009627">
    <property type="term" value="P:systemic acquired resistance"/>
    <property type="evidence" value="ECO:0007669"/>
    <property type="project" value="InterPro"/>
</dbReference>
<dbReference type="CDD" id="cd22269">
    <property type="entry name" value="DPBB_EG45-like"/>
    <property type="match status" value="1"/>
</dbReference>
<dbReference type="FunFam" id="2.40.40.10:FF:000005">
    <property type="entry name" value="Barwin-related endoglucanase"/>
    <property type="match status" value="1"/>
</dbReference>
<dbReference type="Gene3D" id="2.40.40.10">
    <property type="entry name" value="RlpA-like domain"/>
    <property type="match status" value="1"/>
</dbReference>
<dbReference type="InterPro" id="IPR044206">
    <property type="entry name" value="EGC1/2"/>
</dbReference>
<dbReference type="InterPro" id="IPR007112">
    <property type="entry name" value="Expansin/allergen_DPBB_dom"/>
</dbReference>
<dbReference type="InterPro" id="IPR009009">
    <property type="entry name" value="RlpA-like_DPBB"/>
</dbReference>
<dbReference type="InterPro" id="IPR036908">
    <property type="entry name" value="RlpA-like_sf"/>
</dbReference>
<dbReference type="PANTHER" id="PTHR47295:SF10">
    <property type="entry name" value="EG45-LIKE DOMAIN CONTAINING PROTEIN"/>
    <property type="match status" value="1"/>
</dbReference>
<dbReference type="PANTHER" id="PTHR47295">
    <property type="entry name" value="EG45-LIKE DOMAIN CONTAINING PROTEIN 1-RELATED"/>
    <property type="match status" value="1"/>
</dbReference>
<dbReference type="Pfam" id="PF03330">
    <property type="entry name" value="DPBB_1"/>
    <property type="match status" value="1"/>
</dbReference>
<dbReference type="SMART" id="SM00837">
    <property type="entry name" value="DPBB_1"/>
    <property type="match status" value="1"/>
</dbReference>
<dbReference type="SUPFAM" id="SSF50685">
    <property type="entry name" value="Barwin-like endoglucanases"/>
    <property type="match status" value="1"/>
</dbReference>
<dbReference type="PROSITE" id="PS50842">
    <property type="entry name" value="EXPANSIN_EG45"/>
    <property type="match status" value="1"/>
</dbReference>
<name>EGC_CITJA</name>
<reference key="1">
    <citation type="journal article" date="1998" name="Plant Mol. Biol.">
        <title>A novel protein associated with citrus blight has sequence similarities to expansin.</title>
        <authorList>
            <person name="Ceccardi T.L."/>
            <person name="Barthe G.A."/>
            <person name="Derrick K.S."/>
        </authorList>
    </citation>
    <scope>NUCLEOTIDE SEQUENCE [MRNA]</scope>
    <scope>PROTEIN SEQUENCE OF 25-59</scope>
    <scope>TISSUE SPECIFICITY</scope>
    <source>
        <tissue>Root</tissue>
    </source>
</reference>
<reference key="2">
    <citation type="journal article" date="2002" name="J. Mol. Evol.">
        <title>Expansin-like molecules: novel functions derived from common domains.</title>
        <authorList>
            <person name="Ludidi N.N."/>
            <person name="Heazlewood J.L."/>
            <person name="Seoighe C."/>
            <person name="Irving H.R."/>
            <person name="Gehring C.A."/>
        </authorList>
    </citation>
    <scope>FUNCTION</scope>
</reference>
<comment type="function">
    <text evidence="3">Might have a systemic role in water and solute homeostasis. Has no expansin-like activity.</text>
</comment>
<comment type="subcellular location">
    <subcellularLocation>
        <location evidence="5">Secreted</location>
    </subcellularLocation>
</comment>
<comment type="tissue specificity">
    <text evidence="4">Expressed in the outer layer of xylem and the vascular cambial zone of roots, in shoot cambium, but not in leaves.</text>
</comment>
<comment type="induction">
    <text>By citrus blight. Not expressed in healthy plants.</text>
</comment>
<comment type="miscellaneous">
    <text>Accumulation of the protein in leaf tissues indicates a systemic mobility.</text>
</comment>
<sequence>MGVGTKVLVITTMAICLISSAAYASEGTATFYTPPYVPSACNGYKNDGVMIAAASYAIWNNGAVCNKSFRVKCTGATNQGTPHPCRGGSVLVKIVDLCPAGCQATIDLSQEAFSQIANPDAGKIKIEFNQA</sequence>
<gene>
    <name type="primary">CjBAp12</name>
</gene>
<protein>
    <recommendedName>
        <fullName>EG45-like domain containing protein</fullName>
    </recommendedName>
    <alternativeName>
        <fullName>Blight-associated protein p12</fullName>
    </alternativeName>
    <alternativeName>
        <fullName>Plant natriuretic peptide</fullName>
        <shortName>PNP</shortName>
    </alternativeName>
</protein>
<proteinExistence type="evidence at protein level"/>
<organism>
    <name type="scientific">Citrus jambhiri</name>
    <name type="common">Rough lemon</name>
    <dbReference type="NCBI Taxonomy" id="64884"/>
    <lineage>
        <taxon>Eukaryota</taxon>
        <taxon>Viridiplantae</taxon>
        <taxon>Streptophyta</taxon>
        <taxon>Embryophyta</taxon>
        <taxon>Tracheophyta</taxon>
        <taxon>Spermatophyta</taxon>
        <taxon>Magnoliopsida</taxon>
        <taxon>eudicotyledons</taxon>
        <taxon>Gunneridae</taxon>
        <taxon>Pentapetalae</taxon>
        <taxon>rosids</taxon>
        <taxon>malvids</taxon>
        <taxon>Sapindales</taxon>
        <taxon>Rutaceae</taxon>
        <taxon>Aurantioideae</taxon>
        <taxon>Citrus</taxon>
    </lineage>
</organism>
<evidence type="ECO:0000255" key="1"/>
<evidence type="ECO:0000255" key="2">
    <source>
        <dbReference type="PROSITE-ProRule" id="PRU00079"/>
    </source>
</evidence>
<evidence type="ECO:0000269" key="3">
    <source>
    </source>
</evidence>
<evidence type="ECO:0000269" key="4">
    <source>
    </source>
</evidence>
<evidence type="ECO:0000305" key="5"/>